<protein>
    <recommendedName>
        <fullName evidence="1">N-acetylmuramic acid 6-phosphate etherase</fullName>
        <shortName evidence="1">MurNAc-6-P etherase</shortName>
        <ecNumber evidence="1">4.2.1.126</ecNumber>
    </recommendedName>
    <alternativeName>
        <fullName evidence="1">N-acetylmuramic acid 6-phosphate hydrolase</fullName>
    </alternativeName>
    <alternativeName>
        <fullName evidence="1">N-acetylmuramic acid 6-phosphate lyase</fullName>
    </alternativeName>
</protein>
<name>MURQ_ECO8A</name>
<organism>
    <name type="scientific">Escherichia coli O8 (strain IAI1)</name>
    <dbReference type="NCBI Taxonomy" id="585034"/>
    <lineage>
        <taxon>Bacteria</taxon>
        <taxon>Pseudomonadati</taxon>
        <taxon>Pseudomonadota</taxon>
        <taxon>Gammaproteobacteria</taxon>
        <taxon>Enterobacterales</taxon>
        <taxon>Enterobacteriaceae</taxon>
        <taxon>Escherichia</taxon>
    </lineage>
</organism>
<comment type="function">
    <text evidence="1">Specifically catalyzes the cleavage of the D-lactyl ether substituent of MurNAc 6-phosphate, producing GlcNAc 6-phosphate and D-lactate. Together with AnmK, is also required for the utilization of anhydro-N-acetylmuramic acid (anhMurNAc) either imported from the medium or derived from its own cell wall murein, and thus plays a role in cell wall recycling.</text>
</comment>
<comment type="catalytic activity">
    <reaction evidence="1">
        <text>N-acetyl-D-muramate 6-phosphate + H2O = N-acetyl-D-glucosamine 6-phosphate + (R)-lactate</text>
        <dbReference type="Rhea" id="RHEA:26410"/>
        <dbReference type="ChEBI" id="CHEBI:15377"/>
        <dbReference type="ChEBI" id="CHEBI:16004"/>
        <dbReference type="ChEBI" id="CHEBI:57513"/>
        <dbReference type="ChEBI" id="CHEBI:58722"/>
        <dbReference type="EC" id="4.2.1.126"/>
    </reaction>
</comment>
<comment type="pathway">
    <text evidence="1">Amino-sugar metabolism; 1,6-anhydro-N-acetylmuramate degradation.</text>
</comment>
<comment type="pathway">
    <text evidence="1">Amino-sugar metabolism; N-acetylmuramate degradation.</text>
</comment>
<comment type="pathway">
    <text evidence="1">Cell wall biogenesis; peptidoglycan recycling.</text>
</comment>
<comment type="subunit">
    <text evidence="1">Homodimer.</text>
</comment>
<comment type="induction">
    <text evidence="1">Induced by MurNAc 6-phosphate that releases the repressor MurR from the DNA. Repressed by MurR in the absence of MurNAc 6-phosphate.</text>
</comment>
<comment type="miscellaneous">
    <text evidence="1">A lyase-type mechanism (elimination/hydration) is suggested for the cleavage of the lactyl ether bond of MurNAc 6-phosphate, with the formation of an alpha,beta-unsaturated aldehyde intermediate with (E)-stereochemistry, followed by the syn addition of water to give product.</text>
</comment>
<comment type="similarity">
    <text evidence="1">Belongs to the GCKR-like family. MurNAc-6-P etherase subfamily.</text>
</comment>
<evidence type="ECO:0000255" key="1">
    <source>
        <dbReference type="HAMAP-Rule" id="MF_00068"/>
    </source>
</evidence>
<proteinExistence type="inferred from homology"/>
<accession>B7M6T7</accession>
<reference key="1">
    <citation type="journal article" date="2009" name="PLoS Genet.">
        <title>Organised genome dynamics in the Escherichia coli species results in highly diverse adaptive paths.</title>
        <authorList>
            <person name="Touchon M."/>
            <person name="Hoede C."/>
            <person name="Tenaillon O."/>
            <person name="Barbe V."/>
            <person name="Baeriswyl S."/>
            <person name="Bidet P."/>
            <person name="Bingen E."/>
            <person name="Bonacorsi S."/>
            <person name="Bouchier C."/>
            <person name="Bouvet O."/>
            <person name="Calteau A."/>
            <person name="Chiapello H."/>
            <person name="Clermont O."/>
            <person name="Cruveiller S."/>
            <person name="Danchin A."/>
            <person name="Diard M."/>
            <person name="Dossat C."/>
            <person name="Karoui M.E."/>
            <person name="Frapy E."/>
            <person name="Garry L."/>
            <person name="Ghigo J.M."/>
            <person name="Gilles A.M."/>
            <person name="Johnson J."/>
            <person name="Le Bouguenec C."/>
            <person name="Lescat M."/>
            <person name="Mangenot S."/>
            <person name="Martinez-Jehanne V."/>
            <person name="Matic I."/>
            <person name="Nassif X."/>
            <person name="Oztas S."/>
            <person name="Petit M.A."/>
            <person name="Pichon C."/>
            <person name="Rouy Z."/>
            <person name="Ruf C.S."/>
            <person name="Schneider D."/>
            <person name="Tourret J."/>
            <person name="Vacherie B."/>
            <person name="Vallenet D."/>
            <person name="Medigue C."/>
            <person name="Rocha E.P.C."/>
            <person name="Denamur E."/>
        </authorList>
    </citation>
    <scope>NUCLEOTIDE SEQUENCE [LARGE SCALE GENOMIC DNA]</scope>
    <source>
        <strain>IAI1</strain>
    </source>
</reference>
<dbReference type="EC" id="4.2.1.126" evidence="1"/>
<dbReference type="EMBL" id="CU928160">
    <property type="protein sequence ID" value="CAQ99325.1"/>
    <property type="molecule type" value="Genomic_DNA"/>
</dbReference>
<dbReference type="RefSeq" id="WP_001175648.1">
    <property type="nucleotide sequence ID" value="NC_011741.1"/>
</dbReference>
<dbReference type="SMR" id="B7M6T7"/>
<dbReference type="KEGG" id="ecr:ECIAI1_2485"/>
<dbReference type="HOGENOM" id="CLU_049049_1_1_6"/>
<dbReference type="UniPathway" id="UPA00342"/>
<dbReference type="UniPathway" id="UPA00343"/>
<dbReference type="UniPathway" id="UPA00544"/>
<dbReference type="GO" id="GO:0097367">
    <property type="term" value="F:carbohydrate derivative binding"/>
    <property type="evidence" value="ECO:0007669"/>
    <property type="project" value="InterPro"/>
</dbReference>
<dbReference type="GO" id="GO:0016835">
    <property type="term" value="F:carbon-oxygen lyase activity"/>
    <property type="evidence" value="ECO:0007669"/>
    <property type="project" value="UniProtKB-UniRule"/>
</dbReference>
<dbReference type="GO" id="GO:0016803">
    <property type="term" value="F:ether hydrolase activity"/>
    <property type="evidence" value="ECO:0007669"/>
    <property type="project" value="TreeGrafter"/>
</dbReference>
<dbReference type="GO" id="GO:0097175">
    <property type="term" value="P:1,6-anhydro-N-acetyl-beta-muramic acid catabolic process"/>
    <property type="evidence" value="ECO:0007669"/>
    <property type="project" value="UniProtKB-UniRule"/>
</dbReference>
<dbReference type="GO" id="GO:0046348">
    <property type="term" value="P:amino sugar catabolic process"/>
    <property type="evidence" value="ECO:0007669"/>
    <property type="project" value="InterPro"/>
</dbReference>
<dbReference type="GO" id="GO:0097173">
    <property type="term" value="P:N-acetylmuramic acid catabolic process"/>
    <property type="evidence" value="ECO:0007669"/>
    <property type="project" value="UniProtKB-UniPathway"/>
</dbReference>
<dbReference type="GO" id="GO:0009254">
    <property type="term" value="P:peptidoglycan turnover"/>
    <property type="evidence" value="ECO:0007669"/>
    <property type="project" value="UniProtKB-UniRule"/>
</dbReference>
<dbReference type="CDD" id="cd05007">
    <property type="entry name" value="SIS_Etherase"/>
    <property type="match status" value="1"/>
</dbReference>
<dbReference type="FunFam" id="1.10.8.1080:FF:000001">
    <property type="entry name" value="N-acetylmuramic acid 6-phosphate etherase"/>
    <property type="match status" value="1"/>
</dbReference>
<dbReference type="FunFam" id="3.40.50.10490:FF:000014">
    <property type="entry name" value="N-acetylmuramic acid 6-phosphate etherase"/>
    <property type="match status" value="1"/>
</dbReference>
<dbReference type="Gene3D" id="1.10.8.1080">
    <property type="match status" value="1"/>
</dbReference>
<dbReference type="Gene3D" id="3.40.50.10490">
    <property type="entry name" value="Glucose-6-phosphate isomerase like protein, domain 1"/>
    <property type="match status" value="1"/>
</dbReference>
<dbReference type="HAMAP" id="MF_00068">
    <property type="entry name" value="MurQ"/>
    <property type="match status" value="1"/>
</dbReference>
<dbReference type="InterPro" id="IPR005488">
    <property type="entry name" value="Etherase_MurQ"/>
</dbReference>
<dbReference type="InterPro" id="IPR005486">
    <property type="entry name" value="Glucokinase_regulatory_CS"/>
</dbReference>
<dbReference type="InterPro" id="IPR040190">
    <property type="entry name" value="MURQ/GCKR"/>
</dbReference>
<dbReference type="InterPro" id="IPR001347">
    <property type="entry name" value="SIS_dom"/>
</dbReference>
<dbReference type="InterPro" id="IPR046348">
    <property type="entry name" value="SIS_dom_sf"/>
</dbReference>
<dbReference type="NCBIfam" id="TIGR00274">
    <property type="entry name" value="N-acetylmuramic acid 6-phosphate etherase"/>
    <property type="match status" value="1"/>
</dbReference>
<dbReference type="NCBIfam" id="NF003915">
    <property type="entry name" value="PRK05441.1"/>
    <property type="match status" value="1"/>
</dbReference>
<dbReference type="NCBIfam" id="NF009222">
    <property type="entry name" value="PRK12570.1"/>
    <property type="match status" value="1"/>
</dbReference>
<dbReference type="PANTHER" id="PTHR10088">
    <property type="entry name" value="GLUCOKINASE REGULATORY PROTEIN"/>
    <property type="match status" value="1"/>
</dbReference>
<dbReference type="PANTHER" id="PTHR10088:SF4">
    <property type="entry name" value="GLUCOKINASE REGULATORY PROTEIN"/>
    <property type="match status" value="1"/>
</dbReference>
<dbReference type="Pfam" id="PF22645">
    <property type="entry name" value="GKRP_SIS_N"/>
    <property type="match status" value="1"/>
</dbReference>
<dbReference type="SUPFAM" id="SSF53697">
    <property type="entry name" value="SIS domain"/>
    <property type="match status" value="1"/>
</dbReference>
<dbReference type="PROSITE" id="PS01272">
    <property type="entry name" value="GCKR"/>
    <property type="match status" value="1"/>
</dbReference>
<dbReference type="PROSITE" id="PS51464">
    <property type="entry name" value="SIS"/>
    <property type="match status" value="1"/>
</dbReference>
<sequence>MQLEKMITEGSNTASAEIDRVSTLEMCRIINDEDKTVPLAVERVLPDIAAAIDVIHAQVSGGGRLIYLGAGTSGRLGILDASECPPTYGVKPGLVVGLIAGGEYAIQHAVEGAEDSREGGVNDLKNINLTAQDVVVGIAASGRTPYVIAGLEYARQLGCRTVGISCNPGSAVSTTAEFAITPIVGAEVVTGSSRMKAGTAQKLVLNMLSTGLMIKSGKVFGNLMVDVVATNEKLHVRQVNIVKNATGCNAEQAEAALIACERNCKTAIVMVLKNLDAAEAKKRLDQHGGFIRQVLDKE</sequence>
<keyword id="KW-0119">Carbohydrate metabolism</keyword>
<keyword id="KW-0456">Lyase</keyword>
<gene>
    <name evidence="1" type="primary">murQ</name>
    <name type="ordered locus">ECIAI1_2485</name>
</gene>
<feature type="chain" id="PRO_1000116994" description="N-acetylmuramic acid 6-phosphate etherase">
    <location>
        <begin position="1"/>
        <end position="298"/>
    </location>
</feature>
<feature type="domain" description="SIS" evidence="1">
    <location>
        <begin position="55"/>
        <end position="218"/>
    </location>
</feature>
<feature type="active site" description="Proton donor" evidence="1">
    <location>
        <position position="83"/>
    </location>
</feature>
<feature type="active site" evidence="1">
    <location>
        <position position="114"/>
    </location>
</feature>